<sequence length="147" mass="16493">MSMSTSTEVIAHHWAFAIFLIVAIGLCCLMLVGGWFLGGRARARHKNVPFESGIDSVGTARLRLSAKFYLVAMFFVIFDVEALYLFAWSTSIRESGWVGFVEAAIFIFVLLAGLVYLARIGALDWTPARSRRERMNPETNSIANRQR</sequence>
<proteinExistence type="inferred from homology"/>
<evidence type="ECO:0000255" key="1">
    <source>
        <dbReference type="HAMAP-Rule" id="MF_01394"/>
    </source>
</evidence>
<feature type="chain" id="PRO_0000362770" description="NADH-quinone oxidoreductase subunit A">
    <location>
        <begin position="1"/>
        <end position="147"/>
    </location>
</feature>
<feature type="transmembrane region" description="Helical" evidence="1">
    <location>
        <begin position="16"/>
        <end position="36"/>
    </location>
</feature>
<feature type="transmembrane region" description="Helical" evidence="1">
    <location>
        <begin position="68"/>
        <end position="88"/>
    </location>
</feature>
<feature type="transmembrane region" description="Helical" evidence="1">
    <location>
        <begin position="97"/>
        <end position="117"/>
    </location>
</feature>
<organism>
    <name type="scientific">Salmonella newport (strain SL254)</name>
    <dbReference type="NCBI Taxonomy" id="423368"/>
    <lineage>
        <taxon>Bacteria</taxon>
        <taxon>Pseudomonadati</taxon>
        <taxon>Pseudomonadota</taxon>
        <taxon>Gammaproteobacteria</taxon>
        <taxon>Enterobacterales</taxon>
        <taxon>Enterobacteriaceae</taxon>
        <taxon>Salmonella</taxon>
    </lineage>
</organism>
<gene>
    <name evidence="1" type="primary">nuoA</name>
    <name type="ordered locus">SNSL254_A2512</name>
</gene>
<protein>
    <recommendedName>
        <fullName evidence="1">NADH-quinone oxidoreductase subunit A</fullName>
        <ecNumber evidence="1">7.1.1.-</ecNumber>
    </recommendedName>
    <alternativeName>
        <fullName evidence="1">NADH dehydrogenase I subunit A</fullName>
    </alternativeName>
    <alternativeName>
        <fullName evidence="1">NDH-1 subunit A</fullName>
    </alternativeName>
    <alternativeName>
        <fullName evidence="1">NUO1</fullName>
    </alternativeName>
</protein>
<keyword id="KW-0997">Cell inner membrane</keyword>
<keyword id="KW-1003">Cell membrane</keyword>
<keyword id="KW-0472">Membrane</keyword>
<keyword id="KW-0520">NAD</keyword>
<keyword id="KW-0874">Quinone</keyword>
<keyword id="KW-1278">Translocase</keyword>
<keyword id="KW-0812">Transmembrane</keyword>
<keyword id="KW-1133">Transmembrane helix</keyword>
<keyword id="KW-0813">Transport</keyword>
<keyword id="KW-0830">Ubiquinone</keyword>
<dbReference type="EC" id="7.1.1.-" evidence="1"/>
<dbReference type="EMBL" id="CP001113">
    <property type="protein sequence ID" value="ACF63875.1"/>
    <property type="molecule type" value="Genomic_DNA"/>
</dbReference>
<dbReference type="RefSeq" id="WP_000062993.1">
    <property type="nucleotide sequence ID" value="NZ_CCMR01000001.1"/>
</dbReference>
<dbReference type="SMR" id="B4SYZ9"/>
<dbReference type="GeneID" id="66756777"/>
<dbReference type="KEGG" id="see:SNSL254_A2512"/>
<dbReference type="HOGENOM" id="CLU_119549_2_0_6"/>
<dbReference type="Proteomes" id="UP000008824">
    <property type="component" value="Chromosome"/>
</dbReference>
<dbReference type="GO" id="GO:0030964">
    <property type="term" value="C:NADH dehydrogenase complex"/>
    <property type="evidence" value="ECO:0007669"/>
    <property type="project" value="TreeGrafter"/>
</dbReference>
<dbReference type="GO" id="GO:0005886">
    <property type="term" value="C:plasma membrane"/>
    <property type="evidence" value="ECO:0007669"/>
    <property type="project" value="UniProtKB-SubCell"/>
</dbReference>
<dbReference type="GO" id="GO:0008137">
    <property type="term" value="F:NADH dehydrogenase (ubiquinone) activity"/>
    <property type="evidence" value="ECO:0007669"/>
    <property type="project" value="InterPro"/>
</dbReference>
<dbReference type="GO" id="GO:0050136">
    <property type="term" value="F:NADH:ubiquinone reductase (non-electrogenic) activity"/>
    <property type="evidence" value="ECO:0007669"/>
    <property type="project" value="UniProtKB-UniRule"/>
</dbReference>
<dbReference type="GO" id="GO:0048038">
    <property type="term" value="F:quinone binding"/>
    <property type="evidence" value="ECO:0007669"/>
    <property type="project" value="UniProtKB-KW"/>
</dbReference>
<dbReference type="FunFam" id="1.20.58.1610:FF:000003">
    <property type="entry name" value="NADH-quinone oxidoreductase subunit A"/>
    <property type="match status" value="1"/>
</dbReference>
<dbReference type="Gene3D" id="1.20.58.1610">
    <property type="entry name" value="NADH:ubiquinone/plastoquinone oxidoreductase, chain 3"/>
    <property type="match status" value="1"/>
</dbReference>
<dbReference type="HAMAP" id="MF_01394">
    <property type="entry name" value="NDH1_NuoA"/>
    <property type="match status" value="1"/>
</dbReference>
<dbReference type="InterPro" id="IPR023043">
    <property type="entry name" value="NAD(P)H_OxRDtase_bac/plastid"/>
</dbReference>
<dbReference type="InterPro" id="IPR000440">
    <property type="entry name" value="NADH_UbQ/plastoQ_OxRdtase_su3"/>
</dbReference>
<dbReference type="InterPro" id="IPR038430">
    <property type="entry name" value="NDAH_ubi_oxred_su3_sf"/>
</dbReference>
<dbReference type="PANTHER" id="PTHR11058:SF21">
    <property type="entry name" value="NADH-QUINONE OXIDOREDUCTASE SUBUNIT A"/>
    <property type="match status" value="1"/>
</dbReference>
<dbReference type="PANTHER" id="PTHR11058">
    <property type="entry name" value="NADH-UBIQUINONE OXIDOREDUCTASE CHAIN 3"/>
    <property type="match status" value="1"/>
</dbReference>
<dbReference type="Pfam" id="PF00507">
    <property type="entry name" value="Oxidored_q4"/>
    <property type="match status" value="1"/>
</dbReference>
<name>NUOA_SALNS</name>
<reference key="1">
    <citation type="journal article" date="2011" name="J. Bacteriol.">
        <title>Comparative genomics of 28 Salmonella enterica isolates: evidence for CRISPR-mediated adaptive sublineage evolution.</title>
        <authorList>
            <person name="Fricke W.F."/>
            <person name="Mammel M.K."/>
            <person name="McDermott P.F."/>
            <person name="Tartera C."/>
            <person name="White D.G."/>
            <person name="Leclerc J.E."/>
            <person name="Ravel J."/>
            <person name="Cebula T.A."/>
        </authorList>
    </citation>
    <scope>NUCLEOTIDE SEQUENCE [LARGE SCALE GENOMIC DNA]</scope>
    <source>
        <strain>SL254</strain>
    </source>
</reference>
<accession>B4SYZ9</accession>
<comment type="function">
    <text evidence="1">NDH-1 shuttles electrons from NADH, via FMN and iron-sulfur (Fe-S) centers, to quinones in the respiratory chain. The immediate electron acceptor for the enzyme in this species is believed to be ubiquinone. Couples the redox reaction to proton translocation (for every two electrons transferred, four hydrogen ions are translocated across the cytoplasmic membrane), and thus conserves the redox energy in a proton gradient.</text>
</comment>
<comment type="catalytic activity">
    <reaction evidence="1">
        <text>a quinone + NADH + 5 H(+)(in) = a quinol + NAD(+) + 4 H(+)(out)</text>
        <dbReference type="Rhea" id="RHEA:57888"/>
        <dbReference type="ChEBI" id="CHEBI:15378"/>
        <dbReference type="ChEBI" id="CHEBI:24646"/>
        <dbReference type="ChEBI" id="CHEBI:57540"/>
        <dbReference type="ChEBI" id="CHEBI:57945"/>
        <dbReference type="ChEBI" id="CHEBI:132124"/>
    </reaction>
</comment>
<comment type="subunit">
    <text evidence="1">NDH-1 is composed of 13 different subunits. Subunits NuoA, H, J, K, L, M, N constitute the membrane sector of the complex.</text>
</comment>
<comment type="subcellular location">
    <subcellularLocation>
        <location evidence="1">Cell inner membrane</location>
        <topology evidence="1">Multi-pass membrane protein</topology>
    </subcellularLocation>
</comment>
<comment type="similarity">
    <text evidence="1">Belongs to the complex I subunit 3 family.</text>
</comment>